<sequence>MELESRMDDLECRQAFQDDTLQALNEVVVEQQRSIERLQLQVAALIKRLEDVQGLVGGVEEDEAPPPHY</sequence>
<proteinExistence type="inferred from homology"/>
<evidence type="ECO:0000255" key="1">
    <source>
        <dbReference type="HAMAP-Rule" id="MF_00715"/>
    </source>
</evidence>
<name>SLYX_PSEP7</name>
<organism>
    <name type="scientific">Pseudomonas paraeruginosa (strain DSM 24068 / PA7)</name>
    <name type="common">Pseudomonas aeruginosa (strain PA7)</name>
    <dbReference type="NCBI Taxonomy" id="381754"/>
    <lineage>
        <taxon>Bacteria</taxon>
        <taxon>Pseudomonadati</taxon>
        <taxon>Pseudomonadota</taxon>
        <taxon>Gammaproteobacteria</taxon>
        <taxon>Pseudomonadales</taxon>
        <taxon>Pseudomonadaceae</taxon>
        <taxon>Pseudomonas</taxon>
        <taxon>Pseudomonas paraeruginosa</taxon>
    </lineage>
</organism>
<feature type="chain" id="PRO_1000045724" description="Protein SlyX homolog">
    <location>
        <begin position="1"/>
        <end position="69"/>
    </location>
</feature>
<accession>A6VA12</accession>
<reference key="1">
    <citation type="submission" date="2007-06" db="EMBL/GenBank/DDBJ databases">
        <authorList>
            <person name="Dodson R.J."/>
            <person name="Harkins D."/>
            <person name="Paulsen I.T."/>
        </authorList>
    </citation>
    <scope>NUCLEOTIDE SEQUENCE [LARGE SCALE GENOMIC DNA]</scope>
    <source>
        <strain>DSM 24068 / PA7</strain>
    </source>
</reference>
<gene>
    <name evidence="1" type="primary">slyX</name>
    <name type="ordered locus">PSPA7_4548</name>
</gene>
<protein>
    <recommendedName>
        <fullName evidence="1">Protein SlyX homolog</fullName>
    </recommendedName>
</protein>
<dbReference type="EMBL" id="CP000744">
    <property type="protein sequence ID" value="ABR81699.1"/>
    <property type="molecule type" value="Genomic_DNA"/>
</dbReference>
<dbReference type="RefSeq" id="WP_003155974.1">
    <property type="nucleotide sequence ID" value="NC_009656.1"/>
</dbReference>
<dbReference type="SMR" id="A6VA12"/>
<dbReference type="GeneID" id="77222456"/>
<dbReference type="KEGG" id="pap:PSPA7_4548"/>
<dbReference type="HOGENOM" id="CLU_180796_4_1_6"/>
<dbReference type="Proteomes" id="UP000001582">
    <property type="component" value="Chromosome"/>
</dbReference>
<dbReference type="Gene3D" id="1.20.5.300">
    <property type="match status" value="1"/>
</dbReference>
<dbReference type="HAMAP" id="MF_00715">
    <property type="entry name" value="SlyX"/>
    <property type="match status" value="1"/>
</dbReference>
<dbReference type="InterPro" id="IPR007236">
    <property type="entry name" value="SlyX"/>
</dbReference>
<dbReference type="NCBIfam" id="NF001421">
    <property type="entry name" value="PRK00295.1"/>
    <property type="match status" value="1"/>
</dbReference>
<dbReference type="PANTHER" id="PTHR36508">
    <property type="entry name" value="PROTEIN SLYX"/>
    <property type="match status" value="1"/>
</dbReference>
<dbReference type="PANTHER" id="PTHR36508:SF1">
    <property type="entry name" value="PROTEIN SLYX"/>
    <property type="match status" value="1"/>
</dbReference>
<dbReference type="Pfam" id="PF04102">
    <property type="entry name" value="SlyX"/>
    <property type="match status" value="1"/>
</dbReference>
<comment type="similarity">
    <text evidence="1">Belongs to the SlyX family.</text>
</comment>